<comment type="function">
    <text evidence="1">Binds directly to 23S rRNA. The L1 stalk is quite mobile in the ribosome, and is involved in E site tRNA release.</text>
</comment>
<comment type="function">
    <text evidence="1">Protein L1 is also a translational repressor protein, it controls the translation of the L11 operon by binding to its mRNA.</text>
</comment>
<comment type="subunit">
    <text evidence="1">Part of the 50S ribosomal subunit.</text>
</comment>
<comment type="similarity">
    <text evidence="1">Belongs to the universal ribosomal protein uL1 family.</text>
</comment>
<reference key="1">
    <citation type="journal article" date="2007" name="J. Bacteriol.">
        <title>Genome sequence analysis of the emerging human pathogenic acetic acid bacterium Granulibacter bethesdensis.</title>
        <authorList>
            <person name="Greenberg D.E."/>
            <person name="Porcella S.F."/>
            <person name="Zelazny A.M."/>
            <person name="Virtaneva K."/>
            <person name="Sturdevant D.E."/>
            <person name="Kupko J.J. III"/>
            <person name="Barbian K.D."/>
            <person name="Babar A."/>
            <person name="Dorward D.W."/>
            <person name="Holland S.M."/>
        </authorList>
    </citation>
    <scope>NUCLEOTIDE SEQUENCE [LARGE SCALE GENOMIC DNA]</scope>
    <source>
        <strain>ATCC BAA-1260 / CGDNIH1</strain>
    </source>
</reference>
<sequence>MAHNKRLKAARASVDSTKFYPLTEAVALAKTNARAKFDETIEISLNLGIDPRHADQMVRGLVSLPNGTGKTLRVGVFARGPKAEEAKAAGADVVGAEDLAELVQNGTIEFDRCIATPDMMALVGRLGKILGPRGLMPNPKLGTVTMDVKGAVTAAKSGQIEFRAEKAGIIHAGIGKASFDADKLVENIRALVDAIQKAKPTGAKGTYLQKAALSSSMGPGMRLDVSSLTV</sequence>
<organism>
    <name type="scientific">Granulibacter bethesdensis (strain ATCC BAA-1260 / CGDNIH1)</name>
    <dbReference type="NCBI Taxonomy" id="391165"/>
    <lineage>
        <taxon>Bacteria</taxon>
        <taxon>Pseudomonadati</taxon>
        <taxon>Pseudomonadota</taxon>
        <taxon>Alphaproteobacteria</taxon>
        <taxon>Acetobacterales</taxon>
        <taxon>Acetobacteraceae</taxon>
        <taxon>Granulibacter</taxon>
    </lineage>
</organism>
<name>RL1_GRABC</name>
<protein>
    <recommendedName>
        <fullName evidence="1">Large ribosomal subunit protein uL1</fullName>
    </recommendedName>
    <alternativeName>
        <fullName evidence="2">50S ribosomal protein L1</fullName>
    </alternativeName>
</protein>
<evidence type="ECO:0000255" key="1">
    <source>
        <dbReference type="HAMAP-Rule" id="MF_01318"/>
    </source>
</evidence>
<evidence type="ECO:0000305" key="2"/>
<accession>Q0BUR0</accession>
<proteinExistence type="inferred from homology"/>
<keyword id="KW-1185">Reference proteome</keyword>
<keyword id="KW-0678">Repressor</keyword>
<keyword id="KW-0687">Ribonucleoprotein</keyword>
<keyword id="KW-0689">Ribosomal protein</keyword>
<keyword id="KW-0694">RNA-binding</keyword>
<keyword id="KW-0699">rRNA-binding</keyword>
<keyword id="KW-0810">Translation regulation</keyword>
<keyword id="KW-0820">tRNA-binding</keyword>
<dbReference type="EMBL" id="CP000394">
    <property type="protein sequence ID" value="ABI61442.1"/>
    <property type="molecule type" value="Genomic_DNA"/>
</dbReference>
<dbReference type="RefSeq" id="WP_011631252.1">
    <property type="nucleotide sequence ID" value="NC_008343.2"/>
</dbReference>
<dbReference type="SMR" id="Q0BUR0"/>
<dbReference type="STRING" id="391165.GbCGDNIH1_0544"/>
<dbReference type="KEGG" id="gbe:GbCGDNIH1_0544"/>
<dbReference type="eggNOG" id="COG0081">
    <property type="taxonomic scope" value="Bacteria"/>
</dbReference>
<dbReference type="HOGENOM" id="CLU_062853_0_0_5"/>
<dbReference type="OrthoDB" id="9803740at2"/>
<dbReference type="Proteomes" id="UP000001963">
    <property type="component" value="Chromosome"/>
</dbReference>
<dbReference type="GO" id="GO:0022625">
    <property type="term" value="C:cytosolic large ribosomal subunit"/>
    <property type="evidence" value="ECO:0007669"/>
    <property type="project" value="TreeGrafter"/>
</dbReference>
<dbReference type="GO" id="GO:0019843">
    <property type="term" value="F:rRNA binding"/>
    <property type="evidence" value="ECO:0007669"/>
    <property type="project" value="UniProtKB-UniRule"/>
</dbReference>
<dbReference type="GO" id="GO:0003735">
    <property type="term" value="F:structural constituent of ribosome"/>
    <property type="evidence" value="ECO:0007669"/>
    <property type="project" value="InterPro"/>
</dbReference>
<dbReference type="GO" id="GO:0000049">
    <property type="term" value="F:tRNA binding"/>
    <property type="evidence" value="ECO:0007669"/>
    <property type="project" value="UniProtKB-KW"/>
</dbReference>
<dbReference type="GO" id="GO:0006417">
    <property type="term" value="P:regulation of translation"/>
    <property type="evidence" value="ECO:0007669"/>
    <property type="project" value="UniProtKB-KW"/>
</dbReference>
<dbReference type="GO" id="GO:0006412">
    <property type="term" value="P:translation"/>
    <property type="evidence" value="ECO:0007669"/>
    <property type="project" value="UniProtKB-UniRule"/>
</dbReference>
<dbReference type="CDD" id="cd00403">
    <property type="entry name" value="Ribosomal_L1"/>
    <property type="match status" value="1"/>
</dbReference>
<dbReference type="FunFam" id="3.40.50.790:FF:000001">
    <property type="entry name" value="50S ribosomal protein L1"/>
    <property type="match status" value="1"/>
</dbReference>
<dbReference type="Gene3D" id="3.30.190.20">
    <property type="match status" value="1"/>
</dbReference>
<dbReference type="Gene3D" id="3.40.50.790">
    <property type="match status" value="1"/>
</dbReference>
<dbReference type="HAMAP" id="MF_01318_B">
    <property type="entry name" value="Ribosomal_uL1_B"/>
    <property type="match status" value="1"/>
</dbReference>
<dbReference type="InterPro" id="IPR005878">
    <property type="entry name" value="Ribosom_uL1_bac-type"/>
</dbReference>
<dbReference type="InterPro" id="IPR002143">
    <property type="entry name" value="Ribosomal_uL1"/>
</dbReference>
<dbReference type="InterPro" id="IPR023674">
    <property type="entry name" value="Ribosomal_uL1-like"/>
</dbReference>
<dbReference type="InterPro" id="IPR028364">
    <property type="entry name" value="Ribosomal_uL1/biogenesis"/>
</dbReference>
<dbReference type="InterPro" id="IPR016095">
    <property type="entry name" value="Ribosomal_uL1_3-a/b-sand"/>
</dbReference>
<dbReference type="InterPro" id="IPR023673">
    <property type="entry name" value="Ribosomal_uL1_CS"/>
</dbReference>
<dbReference type="NCBIfam" id="TIGR01169">
    <property type="entry name" value="rplA_bact"/>
    <property type="match status" value="1"/>
</dbReference>
<dbReference type="PANTHER" id="PTHR36427">
    <property type="entry name" value="54S RIBOSOMAL PROTEIN L1, MITOCHONDRIAL"/>
    <property type="match status" value="1"/>
</dbReference>
<dbReference type="PANTHER" id="PTHR36427:SF3">
    <property type="entry name" value="LARGE RIBOSOMAL SUBUNIT PROTEIN UL1M"/>
    <property type="match status" value="1"/>
</dbReference>
<dbReference type="Pfam" id="PF00687">
    <property type="entry name" value="Ribosomal_L1"/>
    <property type="match status" value="1"/>
</dbReference>
<dbReference type="PIRSF" id="PIRSF002155">
    <property type="entry name" value="Ribosomal_L1"/>
    <property type="match status" value="1"/>
</dbReference>
<dbReference type="SUPFAM" id="SSF56808">
    <property type="entry name" value="Ribosomal protein L1"/>
    <property type="match status" value="1"/>
</dbReference>
<dbReference type="PROSITE" id="PS01199">
    <property type="entry name" value="RIBOSOMAL_L1"/>
    <property type="match status" value="1"/>
</dbReference>
<feature type="chain" id="PRO_0000308015" description="Large ribosomal subunit protein uL1">
    <location>
        <begin position="1"/>
        <end position="230"/>
    </location>
</feature>
<gene>
    <name evidence="1" type="primary">rplA</name>
    <name type="ordered locus">GbCGDNIH1_0544</name>
</gene>